<feature type="chain" id="PRO_0000245747" description="NADH-quinone oxidoreductase subunit I">
    <location>
        <begin position="1"/>
        <end position="180"/>
    </location>
</feature>
<feature type="domain" description="4Fe-4S ferredoxin-type 1" evidence="1">
    <location>
        <begin position="50"/>
        <end position="80"/>
    </location>
</feature>
<feature type="domain" description="4Fe-4S ferredoxin-type 2" evidence="1">
    <location>
        <begin position="90"/>
        <end position="119"/>
    </location>
</feature>
<feature type="binding site" evidence="1">
    <location>
        <position position="60"/>
    </location>
    <ligand>
        <name>[4Fe-4S] cluster</name>
        <dbReference type="ChEBI" id="CHEBI:49883"/>
        <label>1</label>
    </ligand>
</feature>
<feature type="binding site" evidence="1">
    <location>
        <position position="63"/>
    </location>
    <ligand>
        <name>[4Fe-4S] cluster</name>
        <dbReference type="ChEBI" id="CHEBI:49883"/>
        <label>1</label>
    </ligand>
</feature>
<feature type="binding site" evidence="1">
    <location>
        <position position="66"/>
    </location>
    <ligand>
        <name>[4Fe-4S] cluster</name>
        <dbReference type="ChEBI" id="CHEBI:49883"/>
        <label>1</label>
    </ligand>
</feature>
<feature type="binding site" evidence="1">
    <location>
        <position position="70"/>
    </location>
    <ligand>
        <name>[4Fe-4S] cluster</name>
        <dbReference type="ChEBI" id="CHEBI:49883"/>
        <label>2</label>
    </ligand>
</feature>
<feature type="binding site" evidence="1">
    <location>
        <position position="99"/>
    </location>
    <ligand>
        <name>[4Fe-4S] cluster</name>
        <dbReference type="ChEBI" id="CHEBI:49883"/>
        <label>2</label>
    </ligand>
</feature>
<feature type="binding site" evidence="1">
    <location>
        <position position="102"/>
    </location>
    <ligand>
        <name>[4Fe-4S] cluster</name>
        <dbReference type="ChEBI" id="CHEBI:49883"/>
        <label>2</label>
    </ligand>
</feature>
<feature type="binding site" evidence="1">
    <location>
        <position position="105"/>
    </location>
    <ligand>
        <name>[4Fe-4S] cluster</name>
        <dbReference type="ChEBI" id="CHEBI:49883"/>
        <label>2</label>
    </ligand>
</feature>
<feature type="binding site" evidence="1">
    <location>
        <position position="109"/>
    </location>
    <ligand>
        <name>[4Fe-4S] cluster</name>
        <dbReference type="ChEBI" id="CHEBI:49883"/>
        <label>1</label>
    </ligand>
</feature>
<proteinExistence type="inferred from homology"/>
<accession>Q32DQ8</accession>
<dbReference type="EC" id="7.1.1.-" evidence="1"/>
<dbReference type="EMBL" id="CP000034">
    <property type="protein sequence ID" value="ABB62547.1"/>
    <property type="molecule type" value="Genomic_DNA"/>
</dbReference>
<dbReference type="RefSeq" id="WP_000172752.1">
    <property type="nucleotide sequence ID" value="NC_007606.1"/>
</dbReference>
<dbReference type="RefSeq" id="YP_404038.1">
    <property type="nucleotide sequence ID" value="NC_007606.1"/>
</dbReference>
<dbReference type="SMR" id="Q32DQ8"/>
<dbReference type="STRING" id="300267.SDY_2477"/>
<dbReference type="EnsemblBacteria" id="ABB62547">
    <property type="protein sequence ID" value="ABB62547"/>
    <property type="gene ID" value="SDY_2477"/>
</dbReference>
<dbReference type="KEGG" id="sdy:SDY_2477"/>
<dbReference type="PATRIC" id="fig|300267.13.peg.2988"/>
<dbReference type="HOGENOM" id="CLU_067218_4_3_6"/>
<dbReference type="Proteomes" id="UP000002716">
    <property type="component" value="Chromosome"/>
</dbReference>
<dbReference type="GO" id="GO:0005886">
    <property type="term" value="C:plasma membrane"/>
    <property type="evidence" value="ECO:0007669"/>
    <property type="project" value="UniProtKB-SubCell"/>
</dbReference>
<dbReference type="GO" id="GO:0051539">
    <property type="term" value="F:4 iron, 4 sulfur cluster binding"/>
    <property type="evidence" value="ECO:0007669"/>
    <property type="project" value="UniProtKB-KW"/>
</dbReference>
<dbReference type="GO" id="GO:0005506">
    <property type="term" value="F:iron ion binding"/>
    <property type="evidence" value="ECO:0007669"/>
    <property type="project" value="UniProtKB-UniRule"/>
</dbReference>
<dbReference type="GO" id="GO:0050136">
    <property type="term" value="F:NADH:ubiquinone reductase (non-electrogenic) activity"/>
    <property type="evidence" value="ECO:0007669"/>
    <property type="project" value="UniProtKB-UniRule"/>
</dbReference>
<dbReference type="GO" id="GO:0048038">
    <property type="term" value="F:quinone binding"/>
    <property type="evidence" value="ECO:0007669"/>
    <property type="project" value="UniProtKB-KW"/>
</dbReference>
<dbReference type="GO" id="GO:0009060">
    <property type="term" value="P:aerobic respiration"/>
    <property type="evidence" value="ECO:0007669"/>
    <property type="project" value="TreeGrafter"/>
</dbReference>
<dbReference type="FunFam" id="3.30.70.3270:FF:000002">
    <property type="entry name" value="NADH-quinone oxidoreductase subunit I"/>
    <property type="match status" value="1"/>
</dbReference>
<dbReference type="Gene3D" id="3.30.70.3270">
    <property type="match status" value="1"/>
</dbReference>
<dbReference type="HAMAP" id="MF_01351">
    <property type="entry name" value="NDH1_NuoI"/>
    <property type="match status" value="1"/>
</dbReference>
<dbReference type="InterPro" id="IPR017896">
    <property type="entry name" value="4Fe4S_Fe-S-bd"/>
</dbReference>
<dbReference type="InterPro" id="IPR017900">
    <property type="entry name" value="4Fe4S_Fe_S_CS"/>
</dbReference>
<dbReference type="InterPro" id="IPR010226">
    <property type="entry name" value="NADH_quinone_OxRdtase_chainI"/>
</dbReference>
<dbReference type="NCBIfam" id="TIGR01971">
    <property type="entry name" value="NuoI"/>
    <property type="match status" value="1"/>
</dbReference>
<dbReference type="NCBIfam" id="NF004536">
    <property type="entry name" value="PRK05888.1-1"/>
    <property type="match status" value="1"/>
</dbReference>
<dbReference type="PANTHER" id="PTHR10849:SF20">
    <property type="entry name" value="NADH DEHYDROGENASE [UBIQUINONE] IRON-SULFUR PROTEIN 8, MITOCHONDRIAL"/>
    <property type="match status" value="1"/>
</dbReference>
<dbReference type="PANTHER" id="PTHR10849">
    <property type="entry name" value="NADH DEHYDROGENASE UBIQUINONE IRON-SULFUR PROTEIN 8, MITOCHONDRIAL"/>
    <property type="match status" value="1"/>
</dbReference>
<dbReference type="Pfam" id="PF12838">
    <property type="entry name" value="Fer4_7"/>
    <property type="match status" value="1"/>
</dbReference>
<dbReference type="SUPFAM" id="SSF54862">
    <property type="entry name" value="4Fe-4S ferredoxins"/>
    <property type="match status" value="1"/>
</dbReference>
<dbReference type="PROSITE" id="PS00198">
    <property type="entry name" value="4FE4S_FER_1"/>
    <property type="match status" value="2"/>
</dbReference>
<dbReference type="PROSITE" id="PS51379">
    <property type="entry name" value="4FE4S_FER_2"/>
    <property type="match status" value="2"/>
</dbReference>
<keyword id="KW-0004">4Fe-4S</keyword>
<keyword id="KW-0997">Cell inner membrane</keyword>
<keyword id="KW-1003">Cell membrane</keyword>
<keyword id="KW-0408">Iron</keyword>
<keyword id="KW-0411">Iron-sulfur</keyword>
<keyword id="KW-0472">Membrane</keyword>
<keyword id="KW-0479">Metal-binding</keyword>
<keyword id="KW-0520">NAD</keyword>
<keyword id="KW-0874">Quinone</keyword>
<keyword id="KW-1185">Reference proteome</keyword>
<keyword id="KW-0677">Repeat</keyword>
<keyword id="KW-1278">Translocase</keyword>
<keyword id="KW-0830">Ubiquinone</keyword>
<name>NUOI_SHIDS</name>
<reference key="1">
    <citation type="journal article" date="2005" name="Nucleic Acids Res.">
        <title>Genome dynamics and diversity of Shigella species, the etiologic agents of bacillary dysentery.</title>
        <authorList>
            <person name="Yang F."/>
            <person name="Yang J."/>
            <person name="Zhang X."/>
            <person name="Chen L."/>
            <person name="Jiang Y."/>
            <person name="Yan Y."/>
            <person name="Tang X."/>
            <person name="Wang J."/>
            <person name="Xiong Z."/>
            <person name="Dong J."/>
            <person name="Xue Y."/>
            <person name="Zhu Y."/>
            <person name="Xu X."/>
            <person name="Sun L."/>
            <person name="Chen S."/>
            <person name="Nie H."/>
            <person name="Peng J."/>
            <person name="Xu J."/>
            <person name="Wang Y."/>
            <person name="Yuan Z."/>
            <person name="Wen Y."/>
            <person name="Yao Z."/>
            <person name="Shen Y."/>
            <person name="Qiang B."/>
            <person name="Hou Y."/>
            <person name="Yu J."/>
            <person name="Jin Q."/>
        </authorList>
    </citation>
    <scope>NUCLEOTIDE SEQUENCE [LARGE SCALE GENOMIC DNA]</scope>
    <source>
        <strain>Sd197</strain>
    </source>
</reference>
<protein>
    <recommendedName>
        <fullName evidence="1">NADH-quinone oxidoreductase subunit I</fullName>
        <ecNumber evidence="1">7.1.1.-</ecNumber>
    </recommendedName>
    <alternativeName>
        <fullName evidence="1">NADH dehydrogenase I subunit I</fullName>
    </alternativeName>
    <alternativeName>
        <fullName evidence="1">NDH-1 subunit I</fullName>
    </alternativeName>
</protein>
<evidence type="ECO:0000255" key="1">
    <source>
        <dbReference type="HAMAP-Rule" id="MF_01351"/>
    </source>
</evidence>
<sequence length="180" mass="20568">MTLKELLVGFGTQVRSIWMIGLHAFAKRETRMYPEEPVYLPPRYRGRIVLTRDPDGEERCVACNLCAVACPVGCISLQKTETKDGRWYPEFFRINFSRCIFCGLCEEACPTTAIQLTPDFEMGEYKRQDLVYEKEDLLISGPGKYPEYNFYRMAGMAIDGKDKGEAENEAKPIDVKSLLP</sequence>
<comment type="function">
    <text evidence="1">NDH-1 shuttles electrons from NADH, via FMN and iron-sulfur (Fe-S) centers, to quinones in the respiratory chain. The immediate electron acceptor for the enzyme in this species is believed to be ubiquinone. Couples the redox reaction to proton translocation (for every two electrons transferred, four hydrogen ions are translocated across the cytoplasmic membrane), and thus conserves the redox energy in a proton gradient.</text>
</comment>
<comment type="catalytic activity">
    <reaction evidence="1">
        <text>a quinone + NADH + 5 H(+)(in) = a quinol + NAD(+) + 4 H(+)(out)</text>
        <dbReference type="Rhea" id="RHEA:57888"/>
        <dbReference type="ChEBI" id="CHEBI:15378"/>
        <dbReference type="ChEBI" id="CHEBI:24646"/>
        <dbReference type="ChEBI" id="CHEBI:57540"/>
        <dbReference type="ChEBI" id="CHEBI:57945"/>
        <dbReference type="ChEBI" id="CHEBI:132124"/>
    </reaction>
</comment>
<comment type="cofactor">
    <cofactor evidence="1">
        <name>[4Fe-4S] cluster</name>
        <dbReference type="ChEBI" id="CHEBI:49883"/>
    </cofactor>
    <text evidence="1">Binds 2 [4Fe-4S] clusters per subunit.</text>
</comment>
<comment type="subunit">
    <text evidence="1">NDH-1 is composed of 13 different subunits. Subunits NuoA, H, J, K, L, M, N constitute the membrane sector of the complex.</text>
</comment>
<comment type="subcellular location">
    <subcellularLocation>
        <location evidence="1">Cell inner membrane</location>
        <topology evidence="1">Peripheral membrane protein</topology>
    </subcellularLocation>
</comment>
<comment type="similarity">
    <text evidence="1">Belongs to the complex I 23 kDa subunit family.</text>
</comment>
<gene>
    <name evidence="1" type="primary">nuoI</name>
    <name type="ordered locus">SDY_2477</name>
</gene>
<organism>
    <name type="scientific">Shigella dysenteriae serotype 1 (strain Sd197)</name>
    <dbReference type="NCBI Taxonomy" id="300267"/>
    <lineage>
        <taxon>Bacteria</taxon>
        <taxon>Pseudomonadati</taxon>
        <taxon>Pseudomonadota</taxon>
        <taxon>Gammaproteobacteria</taxon>
        <taxon>Enterobacterales</taxon>
        <taxon>Enterobacteriaceae</taxon>
        <taxon>Shigella</taxon>
    </lineage>
</organism>